<comment type="similarity">
    <text evidence="1">Belongs to the CinA family.</text>
</comment>
<accession>Q5JJB4</accession>
<name>Y1472_THEKO</name>
<proteinExistence type="inferred from homology"/>
<gene>
    <name type="ordered locus">TK1472</name>
</gene>
<dbReference type="EMBL" id="AP006878">
    <property type="protein sequence ID" value="BAD85661.1"/>
    <property type="molecule type" value="Genomic_DNA"/>
</dbReference>
<dbReference type="RefSeq" id="WP_011250423.1">
    <property type="nucleotide sequence ID" value="NC_006624.1"/>
</dbReference>
<dbReference type="SMR" id="Q5JJB4"/>
<dbReference type="STRING" id="69014.TK1472"/>
<dbReference type="EnsemblBacteria" id="BAD85661">
    <property type="protein sequence ID" value="BAD85661"/>
    <property type="gene ID" value="TK1472"/>
</dbReference>
<dbReference type="GeneID" id="78447994"/>
<dbReference type="KEGG" id="tko:TK1472"/>
<dbReference type="PATRIC" id="fig|69014.16.peg.1433"/>
<dbReference type="eggNOG" id="arCOG00215">
    <property type="taxonomic scope" value="Archaea"/>
</dbReference>
<dbReference type="HOGENOM" id="CLU_030805_0_5_2"/>
<dbReference type="InParanoid" id="Q5JJB4"/>
<dbReference type="OrthoDB" id="372037at2157"/>
<dbReference type="PhylomeDB" id="Q5JJB4"/>
<dbReference type="Proteomes" id="UP000000536">
    <property type="component" value="Chromosome"/>
</dbReference>
<dbReference type="CDD" id="cd00885">
    <property type="entry name" value="cinA"/>
    <property type="match status" value="1"/>
</dbReference>
<dbReference type="Gene3D" id="3.40.980.10">
    <property type="entry name" value="MoaB/Mog-like domain"/>
    <property type="match status" value="1"/>
</dbReference>
<dbReference type="HAMAP" id="MF_00226_A">
    <property type="entry name" value="CinA_A"/>
    <property type="match status" value="1"/>
</dbReference>
<dbReference type="InterPro" id="IPR050101">
    <property type="entry name" value="CinA"/>
</dbReference>
<dbReference type="InterPro" id="IPR023055">
    <property type="entry name" value="CinA_Arc"/>
</dbReference>
<dbReference type="InterPro" id="IPR036425">
    <property type="entry name" value="MoaB/Mog-like_dom_sf"/>
</dbReference>
<dbReference type="InterPro" id="IPR001453">
    <property type="entry name" value="MoaB/Mog_dom"/>
</dbReference>
<dbReference type="NCBIfam" id="TIGR00177">
    <property type="entry name" value="molyb_syn"/>
    <property type="match status" value="1"/>
</dbReference>
<dbReference type="NCBIfam" id="NF002977">
    <property type="entry name" value="PRK03670.1"/>
    <property type="match status" value="1"/>
</dbReference>
<dbReference type="PANTHER" id="PTHR13939">
    <property type="entry name" value="NICOTINAMIDE-NUCLEOTIDE AMIDOHYDROLASE PNCC"/>
    <property type="match status" value="1"/>
</dbReference>
<dbReference type="PANTHER" id="PTHR13939:SF0">
    <property type="entry name" value="NMN AMIDOHYDROLASE-LIKE PROTEIN YFAY"/>
    <property type="match status" value="1"/>
</dbReference>
<dbReference type="Pfam" id="PF00994">
    <property type="entry name" value="MoCF_biosynth"/>
    <property type="match status" value="1"/>
</dbReference>
<dbReference type="SMART" id="SM00852">
    <property type="entry name" value="MoCF_biosynth"/>
    <property type="match status" value="1"/>
</dbReference>
<dbReference type="SUPFAM" id="SSF53218">
    <property type="entry name" value="Molybdenum cofactor biosynthesis proteins"/>
    <property type="match status" value="1"/>
</dbReference>
<feature type="chain" id="PRO_0000156801" description="Protein TK1472">
    <location>
        <begin position="1"/>
        <end position="251"/>
    </location>
</feature>
<protein>
    <recommendedName>
        <fullName evidence="1">Protein TK1472</fullName>
    </recommendedName>
</protein>
<sequence>MFAEVLTIGDELLTGHTVDSNSAFIASKLTEQGYWVRRITTVGDDVEEIKAVVGEILARKPEVLVISGGLGPTHDDVTMLAVAEALGRKLVLCEKCLERIKAFYEKLYSEGYIDDPSLNEGRKKMAYLPEGAEPLENTGGAAPGAFIEHKGVKIFVLPGMPREMKAMLEKEVLPRLGRRKFLQRKFLAEITDESKLAPILREALERFNVRIHSSPKGFGKYIGLIIFAEDEGELEKTVEYLESRGIRLEEA</sequence>
<keyword id="KW-1185">Reference proteome</keyword>
<organism>
    <name type="scientific">Thermococcus kodakarensis (strain ATCC BAA-918 / JCM 12380 / KOD1)</name>
    <name type="common">Pyrococcus kodakaraensis (strain KOD1)</name>
    <dbReference type="NCBI Taxonomy" id="69014"/>
    <lineage>
        <taxon>Archaea</taxon>
        <taxon>Methanobacteriati</taxon>
        <taxon>Methanobacteriota</taxon>
        <taxon>Thermococci</taxon>
        <taxon>Thermococcales</taxon>
        <taxon>Thermococcaceae</taxon>
        <taxon>Thermococcus</taxon>
    </lineage>
</organism>
<evidence type="ECO:0000255" key="1">
    <source>
        <dbReference type="HAMAP-Rule" id="MF_00226"/>
    </source>
</evidence>
<reference key="1">
    <citation type="journal article" date="2005" name="Genome Res.">
        <title>Complete genome sequence of the hyperthermophilic archaeon Thermococcus kodakaraensis KOD1 and comparison with Pyrococcus genomes.</title>
        <authorList>
            <person name="Fukui T."/>
            <person name="Atomi H."/>
            <person name="Kanai T."/>
            <person name="Matsumi R."/>
            <person name="Fujiwara S."/>
            <person name="Imanaka T."/>
        </authorList>
    </citation>
    <scope>NUCLEOTIDE SEQUENCE [LARGE SCALE GENOMIC DNA]</scope>
    <source>
        <strain>ATCC BAA-918 / JCM 12380 / KOD1</strain>
    </source>
</reference>